<gene>
    <name evidence="1" type="primary">dapD</name>
    <name type="ordered locus">Reut_A1892</name>
</gene>
<evidence type="ECO:0000255" key="1">
    <source>
        <dbReference type="HAMAP-Rule" id="MF_00811"/>
    </source>
</evidence>
<organism>
    <name type="scientific">Cupriavidus pinatubonensis (strain JMP 134 / LMG 1197)</name>
    <name type="common">Cupriavidus necator (strain JMP 134)</name>
    <dbReference type="NCBI Taxonomy" id="264198"/>
    <lineage>
        <taxon>Bacteria</taxon>
        <taxon>Pseudomonadati</taxon>
        <taxon>Pseudomonadota</taxon>
        <taxon>Betaproteobacteria</taxon>
        <taxon>Burkholderiales</taxon>
        <taxon>Burkholderiaceae</taxon>
        <taxon>Cupriavidus</taxon>
    </lineage>
</organism>
<protein>
    <recommendedName>
        <fullName evidence="1">2,3,4,5-tetrahydropyridine-2,6-dicarboxylate N-succinyltransferase</fullName>
        <ecNumber evidence="1">2.3.1.117</ecNumber>
    </recommendedName>
    <alternativeName>
        <fullName evidence="1">Tetrahydrodipicolinate N-succinyltransferase</fullName>
        <shortName evidence="1">THDP succinyltransferase</shortName>
        <shortName evidence="1">THP succinyltransferase</shortName>
        <shortName evidence="1">Tetrahydropicolinate succinylase</shortName>
    </alternativeName>
</protein>
<reference key="1">
    <citation type="journal article" date="2010" name="PLoS ONE">
        <title>The complete multipartite genome sequence of Cupriavidus necator JMP134, a versatile pollutant degrader.</title>
        <authorList>
            <person name="Lykidis A."/>
            <person name="Perez-Pantoja D."/>
            <person name="Ledger T."/>
            <person name="Mavromatis K."/>
            <person name="Anderson I.J."/>
            <person name="Ivanova N.N."/>
            <person name="Hooper S.D."/>
            <person name="Lapidus A."/>
            <person name="Lucas S."/>
            <person name="Gonzalez B."/>
            <person name="Kyrpides N.C."/>
        </authorList>
    </citation>
    <scope>NUCLEOTIDE SEQUENCE [LARGE SCALE GENOMIC DNA]</scope>
    <source>
        <strain>JMP134 / LMG 1197</strain>
    </source>
</reference>
<comment type="catalytic activity">
    <reaction evidence="1">
        <text>(S)-2,3,4,5-tetrahydrodipicolinate + succinyl-CoA + H2O = (S)-2-succinylamino-6-oxoheptanedioate + CoA</text>
        <dbReference type="Rhea" id="RHEA:17325"/>
        <dbReference type="ChEBI" id="CHEBI:15377"/>
        <dbReference type="ChEBI" id="CHEBI:15685"/>
        <dbReference type="ChEBI" id="CHEBI:16845"/>
        <dbReference type="ChEBI" id="CHEBI:57287"/>
        <dbReference type="ChEBI" id="CHEBI:57292"/>
        <dbReference type="EC" id="2.3.1.117"/>
    </reaction>
</comment>
<comment type="pathway">
    <text evidence="1">Amino-acid biosynthesis; L-lysine biosynthesis via DAP pathway; LL-2,6-diaminopimelate from (S)-tetrahydrodipicolinate (succinylase route): step 1/3.</text>
</comment>
<comment type="subunit">
    <text evidence="1">Homotrimer.</text>
</comment>
<comment type="subcellular location">
    <subcellularLocation>
        <location evidence="1">Cytoplasm</location>
    </subcellularLocation>
</comment>
<comment type="similarity">
    <text evidence="1">Belongs to the transferase hexapeptide repeat family.</text>
</comment>
<dbReference type="EC" id="2.3.1.117" evidence="1"/>
<dbReference type="EMBL" id="CP000090">
    <property type="protein sequence ID" value="AAZ61257.1"/>
    <property type="molecule type" value="Genomic_DNA"/>
</dbReference>
<dbReference type="SMR" id="Q470C6"/>
<dbReference type="STRING" id="264198.Reut_A1892"/>
<dbReference type="KEGG" id="reu:Reut_A1892"/>
<dbReference type="eggNOG" id="COG2171">
    <property type="taxonomic scope" value="Bacteria"/>
</dbReference>
<dbReference type="HOGENOM" id="CLU_050859_0_1_4"/>
<dbReference type="OrthoDB" id="9775362at2"/>
<dbReference type="UniPathway" id="UPA00034">
    <property type="reaction ID" value="UER00019"/>
</dbReference>
<dbReference type="GO" id="GO:0005737">
    <property type="term" value="C:cytoplasm"/>
    <property type="evidence" value="ECO:0007669"/>
    <property type="project" value="UniProtKB-SubCell"/>
</dbReference>
<dbReference type="GO" id="GO:0008666">
    <property type="term" value="F:2,3,4,5-tetrahydropyridine-2,6-dicarboxylate N-succinyltransferase activity"/>
    <property type="evidence" value="ECO:0007669"/>
    <property type="project" value="UniProtKB-UniRule"/>
</dbReference>
<dbReference type="GO" id="GO:0016779">
    <property type="term" value="F:nucleotidyltransferase activity"/>
    <property type="evidence" value="ECO:0007669"/>
    <property type="project" value="TreeGrafter"/>
</dbReference>
<dbReference type="GO" id="GO:0019877">
    <property type="term" value="P:diaminopimelate biosynthetic process"/>
    <property type="evidence" value="ECO:0007669"/>
    <property type="project" value="UniProtKB-UniRule"/>
</dbReference>
<dbReference type="GO" id="GO:0009089">
    <property type="term" value="P:lysine biosynthetic process via diaminopimelate"/>
    <property type="evidence" value="ECO:0007669"/>
    <property type="project" value="UniProtKB-UniRule"/>
</dbReference>
<dbReference type="CDD" id="cd03350">
    <property type="entry name" value="LbH_THP_succinylT"/>
    <property type="match status" value="1"/>
</dbReference>
<dbReference type="Gene3D" id="2.160.10.10">
    <property type="entry name" value="Hexapeptide repeat proteins"/>
    <property type="match status" value="1"/>
</dbReference>
<dbReference type="Gene3D" id="1.10.166.10">
    <property type="entry name" value="Tetrahydrodipicolinate-N-succinyltransferase, N-terminal domain"/>
    <property type="match status" value="1"/>
</dbReference>
<dbReference type="HAMAP" id="MF_00811">
    <property type="entry name" value="DapD"/>
    <property type="match status" value="1"/>
</dbReference>
<dbReference type="InterPro" id="IPR005664">
    <property type="entry name" value="DapD_Trfase_Hexpep_rpt_fam"/>
</dbReference>
<dbReference type="InterPro" id="IPR001451">
    <property type="entry name" value="Hexapep"/>
</dbReference>
<dbReference type="InterPro" id="IPR018357">
    <property type="entry name" value="Hexapep_transf_CS"/>
</dbReference>
<dbReference type="InterPro" id="IPR023180">
    <property type="entry name" value="THP_succinylTrfase_dom1"/>
</dbReference>
<dbReference type="InterPro" id="IPR037133">
    <property type="entry name" value="THP_succinylTrfase_N_sf"/>
</dbReference>
<dbReference type="InterPro" id="IPR011004">
    <property type="entry name" value="Trimer_LpxA-like_sf"/>
</dbReference>
<dbReference type="NCBIfam" id="TIGR00965">
    <property type="entry name" value="dapD"/>
    <property type="match status" value="1"/>
</dbReference>
<dbReference type="NCBIfam" id="NF008808">
    <property type="entry name" value="PRK11830.1"/>
    <property type="match status" value="1"/>
</dbReference>
<dbReference type="PANTHER" id="PTHR19136:SF52">
    <property type="entry name" value="2,3,4,5-TETRAHYDROPYRIDINE-2,6-DICARBOXYLATE N-SUCCINYLTRANSFERASE"/>
    <property type="match status" value="1"/>
</dbReference>
<dbReference type="PANTHER" id="PTHR19136">
    <property type="entry name" value="MOLYBDENUM COFACTOR GUANYLYLTRANSFERASE"/>
    <property type="match status" value="1"/>
</dbReference>
<dbReference type="Pfam" id="PF14602">
    <property type="entry name" value="Hexapep_2"/>
    <property type="match status" value="1"/>
</dbReference>
<dbReference type="Pfam" id="PF14805">
    <property type="entry name" value="THDPS_N_2"/>
    <property type="match status" value="1"/>
</dbReference>
<dbReference type="SUPFAM" id="SSF51161">
    <property type="entry name" value="Trimeric LpxA-like enzymes"/>
    <property type="match status" value="1"/>
</dbReference>
<dbReference type="PROSITE" id="PS00101">
    <property type="entry name" value="HEXAPEP_TRANSFERASES"/>
    <property type="match status" value="1"/>
</dbReference>
<sequence length="275" mass="29451">MTQALQALIDQAWEDRTSLSPKSAPADIREAVANVIGQLDAGTLRVAEKQGKDWIVNQWVKKAVLLSFRLEDNAPMSAGGFAQFYDKVPTKFANWSGDDFAKAGFRVVPPAVARRGSFIAKNAVLMPSYVNIGAYVDEGTMVDTWATVGSCAQIGKNVHLSGGVGIGGVLEPLQANPVIIEDNCFIGARSEVVEGVIVEENSVISMGVYLGQSTKIYDRETGEIHYGRVPAGSVVVAGNLPSKDGKYSLYCAVIVKKVDAQTRAKTSLNDLLRGD</sequence>
<keyword id="KW-0012">Acyltransferase</keyword>
<keyword id="KW-0028">Amino-acid biosynthesis</keyword>
<keyword id="KW-0963">Cytoplasm</keyword>
<keyword id="KW-0220">Diaminopimelate biosynthesis</keyword>
<keyword id="KW-0457">Lysine biosynthesis</keyword>
<keyword id="KW-0677">Repeat</keyword>
<keyword id="KW-0808">Transferase</keyword>
<accession>Q470C6</accession>
<feature type="chain" id="PRO_1000047165" description="2,3,4,5-tetrahydropyridine-2,6-dicarboxylate N-succinyltransferase">
    <location>
        <begin position="1"/>
        <end position="275"/>
    </location>
</feature>
<feature type="binding site" evidence="1">
    <location>
        <position position="106"/>
    </location>
    <ligand>
        <name>substrate</name>
    </ligand>
</feature>
<feature type="binding site" evidence="1">
    <location>
        <position position="143"/>
    </location>
    <ligand>
        <name>substrate</name>
    </ligand>
</feature>
<name>DAPD_CUPPJ</name>
<proteinExistence type="inferred from homology"/>